<feature type="chain" id="PRO_0000227691" description="Transcription factor CRF1">
    <location>
        <begin position="1"/>
        <end position="467"/>
    </location>
</feature>
<feature type="region of interest" description="Disordered" evidence="1">
    <location>
        <begin position="1"/>
        <end position="42"/>
    </location>
</feature>
<feature type="region of interest" description="Disordered" evidence="1">
    <location>
        <begin position="62"/>
        <end position="110"/>
    </location>
</feature>
<feature type="region of interest" description="Disordered" evidence="1">
    <location>
        <begin position="151"/>
        <end position="170"/>
    </location>
</feature>
<feature type="region of interest" description="Disordered" evidence="1">
    <location>
        <begin position="341"/>
        <end position="361"/>
    </location>
</feature>
<feature type="compositionally biased region" description="Polar residues" evidence="1">
    <location>
        <begin position="1"/>
        <end position="10"/>
    </location>
</feature>
<feature type="compositionally biased region" description="Basic residues" evidence="1">
    <location>
        <begin position="11"/>
        <end position="23"/>
    </location>
</feature>
<feature type="compositionally biased region" description="Low complexity" evidence="1">
    <location>
        <begin position="28"/>
        <end position="42"/>
    </location>
</feature>
<feature type="compositionally biased region" description="Basic and acidic residues" evidence="1">
    <location>
        <begin position="89"/>
        <end position="102"/>
    </location>
</feature>
<name>CRF1_YEAST</name>
<accession>Q04930</accession>
<accession>D6VSK5</accession>
<gene>
    <name type="primary">CRF1</name>
    <name type="ordered locus">YDR223W</name>
    <name type="ORF">YD9934.08</name>
</gene>
<sequence>MLLSAPVNSTVRRKPHSPNKKKPKETGTAASFSSSSSTVVLSSNNDGSFDALWDPSISKASDFESSYISAKRLKPESSNRQKKKNSYKYSREENTNEVEEKTSLGSSSKTEADNIFNDQLTSAGNTTYVSNKRDVNFGANSAVVLLGLPTSKSESHRQYHSPSASTTNEDEEDIGVDILVDNHIDSCETVSINNNRGITHQYPETESDVDFDEAVILTPMDGTDKGVKNPRPLEKKYSSSCFEDRTPLNLDDGHFSECNHFSTLDVSSFFHLNEHVHKIDEVELDGPDRTFSLDNVAINTRKKDIDCLYNSSREDLSNLTCSSEGPRNDSYDSDYNIDEVTYRDDESTDEDESLPTPDRKRKKIGHKACEILDSKRIGIKVPKLYVWSLSDKPFSVIDGLCTKSLYPLSDDINTPESLSSCSSSVSSRENQKGDATFDNDAMIADLLNIGGLEVEKASNGHIELIGE</sequence>
<comment type="function">
    <text evidence="3 4">Transcription factor, corepressor with FHL1 of ribosomal protein genes. May be involved in the blocking of the spread of silencing.</text>
</comment>
<comment type="subunit">
    <text evidence="4">Interacts with FHL1 to form a repressor complex. The formation of the CRF1-FHL1 complex is inhibited by the TOR pathway.</text>
</comment>
<comment type="subcellular location">
    <subcellularLocation>
        <location evidence="4">Cytoplasm</location>
    </subcellularLocation>
    <subcellularLocation>
        <location evidence="4">Nucleus</location>
    </subcellularLocation>
    <text>The nuclear location is negatively regulated by the TOR pathway.</text>
</comment>
<comment type="PTM">
    <text evidence="2 4">Phosphorylated by CDC28 and YAK1.</text>
</comment>
<reference key="1">
    <citation type="journal article" date="1996" name="Microbiology">
        <title>SPR28, a sixth member of the septin gene family in Saccharomyces cerevisiae that is expressed specifically in sporulating cells.</title>
        <authorList>
            <person name="de Virgilio C."/>
            <person name="DeMarini D.J."/>
            <person name="Pringle J.R."/>
        </authorList>
    </citation>
    <scope>NUCLEOTIDE SEQUENCE [GENOMIC DNA]</scope>
    <source>
        <strain>ATCC 204511 / S288c / AB972</strain>
    </source>
</reference>
<reference key="2">
    <citation type="journal article" date="1997" name="Nature">
        <title>The nucleotide sequence of Saccharomyces cerevisiae chromosome IV.</title>
        <authorList>
            <person name="Jacq C."/>
            <person name="Alt-Moerbe J."/>
            <person name="Andre B."/>
            <person name="Arnold W."/>
            <person name="Bahr A."/>
            <person name="Ballesta J.P.G."/>
            <person name="Bargues M."/>
            <person name="Baron L."/>
            <person name="Becker A."/>
            <person name="Biteau N."/>
            <person name="Bloecker H."/>
            <person name="Blugeon C."/>
            <person name="Boskovic J."/>
            <person name="Brandt P."/>
            <person name="Brueckner M."/>
            <person name="Buitrago M.J."/>
            <person name="Coster F."/>
            <person name="Delaveau T."/>
            <person name="del Rey F."/>
            <person name="Dujon B."/>
            <person name="Eide L.G."/>
            <person name="Garcia-Cantalejo J.M."/>
            <person name="Goffeau A."/>
            <person name="Gomez-Peris A."/>
            <person name="Granotier C."/>
            <person name="Hanemann V."/>
            <person name="Hankeln T."/>
            <person name="Hoheisel J.D."/>
            <person name="Jaeger W."/>
            <person name="Jimenez A."/>
            <person name="Jonniaux J.-L."/>
            <person name="Kraemer C."/>
            <person name="Kuester H."/>
            <person name="Laamanen P."/>
            <person name="Legros Y."/>
            <person name="Louis E.J."/>
            <person name="Moeller-Rieker S."/>
            <person name="Monnet A."/>
            <person name="Moro M."/>
            <person name="Mueller-Auer S."/>
            <person name="Nussbaumer B."/>
            <person name="Paricio N."/>
            <person name="Paulin L."/>
            <person name="Perea J."/>
            <person name="Perez-Alonso M."/>
            <person name="Perez-Ortin J.E."/>
            <person name="Pohl T.M."/>
            <person name="Prydz H."/>
            <person name="Purnelle B."/>
            <person name="Rasmussen S.W."/>
            <person name="Remacha M.A."/>
            <person name="Revuelta J.L."/>
            <person name="Rieger M."/>
            <person name="Salom D."/>
            <person name="Saluz H.P."/>
            <person name="Saiz J.E."/>
            <person name="Saren A.-M."/>
            <person name="Schaefer M."/>
            <person name="Scharfe M."/>
            <person name="Schmidt E.R."/>
            <person name="Schneider C."/>
            <person name="Scholler P."/>
            <person name="Schwarz S."/>
            <person name="Soler-Mira A."/>
            <person name="Urrestarazu L.A."/>
            <person name="Verhasselt P."/>
            <person name="Vissers S."/>
            <person name="Voet M."/>
            <person name="Volckaert G."/>
            <person name="Wagner G."/>
            <person name="Wambutt R."/>
            <person name="Wedler E."/>
            <person name="Wedler H."/>
            <person name="Woelfl S."/>
            <person name="Harris D.E."/>
            <person name="Bowman S."/>
            <person name="Brown D."/>
            <person name="Churcher C.M."/>
            <person name="Connor R."/>
            <person name="Dedman K."/>
            <person name="Gentles S."/>
            <person name="Hamlin N."/>
            <person name="Hunt S."/>
            <person name="Jones L."/>
            <person name="McDonald S."/>
            <person name="Murphy L.D."/>
            <person name="Niblett D."/>
            <person name="Odell C."/>
            <person name="Oliver K."/>
            <person name="Rajandream M.A."/>
            <person name="Richards C."/>
            <person name="Shore L."/>
            <person name="Walsh S.V."/>
            <person name="Barrell B.G."/>
            <person name="Dietrich F.S."/>
            <person name="Mulligan J.T."/>
            <person name="Allen E."/>
            <person name="Araujo R."/>
            <person name="Aviles E."/>
            <person name="Berno A."/>
            <person name="Carpenter J."/>
            <person name="Chen E."/>
            <person name="Cherry J.M."/>
            <person name="Chung E."/>
            <person name="Duncan M."/>
            <person name="Hunicke-Smith S."/>
            <person name="Hyman R.W."/>
            <person name="Komp C."/>
            <person name="Lashkari D."/>
            <person name="Lew H."/>
            <person name="Lin D."/>
            <person name="Mosedale D."/>
            <person name="Nakahara K."/>
            <person name="Namath A."/>
            <person name="Oefner P."/>
            <person name="Oh C."/>
            <person name="Petel F.X."/>
            <person name="Roberts D."/>
            <person name="Schramm S."/>
            <person name="Schroeder M."/>
            <person name="Shogren T."/>
            <person name="Shroff N."/>
            <person name="Winant A."/>
            <person name="Yelton M.A."/>
            <person name="Botstein D."/>
            <person name="Davis R.W."/>
            <person name="Johnston M."/>
            <person name="Andrews S."/>
            <person name="Brinkman R."/>
            <person name="Cooper J."/>
            <person name="Ding H."/>
            <person name="Du Z."/>
            <person name="Favello A."/>
            <person name="Fulton L."/>
            <person name="Gattung S."/>
            <person name="Greco T."/>
            <person name="Hallsworth K."/>
            <person name="Hawkins J."/>
            <person name="Hillier L.W."/>
            <person name="Jier M."/>
            <person name="Johnson D."/>
            <person name="Johnston L."/>
            <person name="Kirsten J."/>
            <person name="Kucaba T."/>
            <person name="Langston Y."/>
            <person name="Latreille P."/>
            <person name="Le T."/>
            <person name="Mardis E."/>
            <person name="Menezes S."/>
            <person name="Miller N."/>
            <person name="Nhan M."/>
            <person name="Pauley A."/>
            <person name="Peluso D."/>
            <person name="Rifkin L."/>
            <person name="Riles L."/>
            <person name="Taich A."/>
            <person name="Trevaskis E."/>
            <person name="Vignati D."/>
            <person name="Wilcox L."/>
            <person name="Wohldman P."/>
            <person name="Vaudin M."/>
            <person name="Wilson R."/>
            <person name="Waterston R."/>
            <person name="Albermann K."/>
            <person name="Hani J."/>
            <person name="Heumann K."/>
            <person name="Kleine K."/>
            <person name="Mewes H.-W."/>
            <person name="Zollner A."/>
            <person name="Zaccaria P."/>
        </authorList>
    </citation>
    <scope>NUCLEOTIDE SEQUENCE [LARGE SCALE GENOMIC DNA]</scope>
    <source>
        <strain>ATCC 204508 / S288c</strain>
    </source>
</reference>
<reference key="3">
    <citation type="journal article" date="2014" name="G3 (Bethesda)">
        <title>The reference genome sequence of Saccharomyces cerevisiae: Then and now.</title>
        <authorList>
            <person name="Engel S.R."/>
            <person name="Dietrich F.S."/>
            <person name="Fisk D.G."/>
            <person name="Binkley G."/>
            <person name="Balakrishnan R."/>
            <person name="Costanzo M.C."/>
            <person name="Dwight S.S."/>
            <person name="Hitz B.C."/>
            <person name="Karra K."/>
            <person name="Nash R.S."/>
            <person name="Weng S."/>
            <person name="Wong E.D."/>
            <person name="Lloyd P."/>
            <person name="Skrzypek M.S."/>
            <person name="Miyasato S.R."/>
            <person name="Simison M."/>
            <person name="Cherry J.M."/>
        </authorList>
    </citation>
    <scope>GENOME REANNOTATION</scope>
    <source>
        <strain>ATCC 204508 / S288c</strain>
    </source>
</reference>
<reference key="4">
    <citation type="journal article" date="2003" name="Nature">
        <title>Targets of the cyclin-dependent kinase Cdk1.</title>
        <authorList>
            <person name="Ubersax J.A."/>
            <person name="Woodbury E.L."/>
            <person name="Quang P.N."/>
            <person name="Paraz M."/>
            <person name="Blethrow J.D."/>
            <person name="Shah K."/>
            <person name="Shokat K.M."/>
            <person name="Morgan D.O."/>
        </authorList>
    </citation>
    <scope>PHOSPHORYLATION BY CDC28</scope>
</reference>
<reference key="5">
    <citation type="journal article" date="2004" name="Cell">
        <title>TOR regulates ribosomal protein gene expression via PKA and the forkhead transcription factor FHL1.</title>
        <authorList>
            <person name="Martin D.E."/>
            <person name="Soulard A."/>
            <person name="Hall M.N."/>
        </authorList>
    </citation>
    <scope>FUNCTION</scope>
    <scope>SUBCELLULAR LOCATION</scope>
    <scope>INTERACTION WITH FHL1</scope>
    <scope>PHOSPHORYLATION BY YAK1</scope>
</reference>
<reference key="6">
    <citation type="journal article" date="2004" name="Mol. Cell. Biol.">
        <title>Barrier proteins remodel and modify chromatin to restrict silenced domains.</title>
        <authorList>
            <person name="Oki M."/>
            <person name="Valenzuela L."/>
            <person name="Chiba T."/>
            <person name="Ito T."/>
            <person name="Kamakaka R.T."/>
        </authorList>
    </citation>
    <scope>FUNCTION</scope>
</reference>
<keyword id="KW-0963">Cytoplasm</keyword>
<keyword id="KW-0539">Nucleus</keyword>
<keyword id="KW-0597">Phosphoprotein</keyword>
<keyword id="KW-1185">Reference proteome</keyword>
<keyword id="KW-0678">Repressor</keyword>
<keyword id="KW-0804">Transcription</keyword>
<keyword id="KW-0805">Transcription regulation</keyword>
<evidence type="ECO:0000256" key="1">
    <source>
        <dbReference type="SAM" id="MobiDB-lite"/>
    </source>
</evidence>
<evidence type="ECO:0000269" key="2">
    <source>
    </source>
</evidence>
<evidence type="ECO:0000269" key="3">
    <source>
    </source>
</evidence>
<evidence type="ECO:0000269" key="4">
    <source>
    </source>
</evidence>
<proteinExistence type="evidence at protein level"/>
<dbReference type="EMBL" id="Z48612">
    <property type="protein sequence ID" value="CAA88503.1"/>
    <property type="molecule type" value="Genomic_DNA"/>
</dbReference>
<dbReference type="EMBL" id="BK006938">
    <property type="protein sequence ID" value="DAA12065.1"/>
    <property type="molecule type" value="Genomic_DNA"/>
</dbReference>
<dbReference type="PIR" id="S59430">
    <property type="entry name" value="S59430"/>
</dbReference>
<dbReference type="RefSeq" id="NP_010509.1">
    <property type="nucleotide sequence ID" value="NM_001180531.1"/>
</dbReference>
<dbReference type="BioGRID" id="32275">
    <property type="interactions" value="30"/>
</dbReference>
<dbReference type="DIP" id="DIP-8620N"/>
<dbReference type="FunCoup" id="Q04930">
    <property type="interactions" value="38"/>
</dbReference>
<dbReference type="IntAct" id="Q04930">
    <property type="interactions" value="1"/>
</dbReference>
<dbReference type="STRING" id="4932.YDR223W"/>
<dbReference type="iPTMnet" id="Q04930"/>
<dbReference type="PaxDb" id="4932-YDR223W"/>
<dbReference type="PeptideAtlas" id="Q04930"/>
<dbReference type="EnsemblFungi" id="YDR223W_mRNA">
    <property type="protein sequence ID" value="YDR223W"/>
    <property type="gene ID" value="YDR223W"/>
</dbReference>
<dbReference type="GeneID" id="851809"/>
<dbReference type="KEGG" id="sce:YDR223W"/>
<dbReference type="AGR" id="SGD:S000002631"/>
<dbReference type="SGD" id="S000002631">
    <property type="gene designation" value="CRF1"/>
</dbReference>
<dbReference type="VEuPathDB" id="FungiDB:YDR223W"/>
<dbReference type="GeneTree" id="ENSGT00940000176808"/>
<dbReference type="HOGENOM" id="CLU_585461_0_0_1"/>
<dbReference type="InParanoid" id="Q04930"/>
<dbReference type="OMA" id="LEKXYSS"/>
<dbReference type="OrthoDB" id="4047468at2759"/>
<dbReference type="BioCyc" id="YEAST:G3O-29803-MONOMER"/>
<dbReference type="BioGRID-ORCS" id="851809">
    <property type="hits" value="0 hits in 10 CRISPR screens"/>
</dbReference>
<dbReference type="PRO" id="PR:Q04930"/>
<dbReference type="Proteomes" id="UP000002311">
    <property type="component" value="Chromosome IV"/>
</dbReference>
<dbReference type="RNAct" id="Q04930">
    <property type="molecule type" value="protein"/>
</dbReference>
<dbReference type="GO" id="GO:0000785">
    <property type="term" value="C:chromatin"/>
    <property type="evidence" value="ECO:0000314"/>
    <property type="project" value="SGD"/>
</dbReference>
<dbReference type="GO" id="GO:0005737">
    <property type="term" value="C:cytoplasm"/>
    <property type="evidence" value="ECO:0000314"/>
    <property type="project" value="SGD"/>
</dbReference>
<dbReference type="GO" id="GO:0005634">
    <property type="term" value="C:nucleus"/>
    <property type="evidence" value="ECO:0000314"/>
    <property type="project" value="SGD"/>
</dbReference>
<dbReference type="GO" id="GO:0003712">
    <property type="term" value="F:transcription coregulator activity"/>
    <property type="evidence" value="ECO:0000318"/>
    <property type="project" value="GO_Central"/>
</dbReference>
<dbReference type="GO" id="GO:0003714">
    <property type="term" value="F:transcription corepressor activity"/>
    <property type="evidence" value="ECO:0000314"/>
    <property type="project" value="SGD"/>
</dbReference>
<dbReference type="GO" id="GO:0010688">
    <property type="term" value="P:negative regulation of ribosomal protein gene transcription by RNA polymerase II"/>
    <property type="evidence" value="ECO:0000315"/>
    <property type="project" value="SGD"/>
</dbReference>
<dbReference type="GO" id="GO:0006357">
    <property type="term" value="P:regulation of transcription by RNA polymerase II"/>
    <property type="evidence" value="ECO:0000318"/>
    <property type="project" value="GO_Central"/>
</dbReference>
<dbReference type="InterPro" id="IPR018837">
    <property type="entry name" value="TF_CRF1/IFH1"/>
</dbReference>
<dbReference type="PANTHER" id="PTHR28057">
    <property type="entry name" value="PROTEIN IFH1-RELATED"/>
    <property type="match status" value="1"/>
</dbReference>
<dbReference type="PANTHER" id="PTHR28057:SF1">
    <property type="entry name" value="PROTEIN IFH1-RELATED"/>
    <property type="match status" value="1"/>
</dbReference>
<dbReference type="Pfam" id="PF10380">
    <property type="entry name" value="CRF1"/>
    <property type="match status" value="1"/>
</dbReference>
<organism>
    <name type="scientific">Saccharomyces cerevisiae (strain ATCC 204508 / S288c)</name>
    <name type="common">Baker's yeast</name>
    <dbReference type="NCBI Taxonomy" id="559292"/>
    <lineage>
        <taxon>Eukaryota</taxon>
        <taxon>Fungi</taxon>
        <taxon>Dikarya</taxon>
        <taxon>Ascomycota</taxon>
        <taxon>Saccharomycotina</taxon>
        <taxon>Saccharomycetes</taxon>
        <taxon>Saccharomycetales</taxon>
        <taxon>Saccharomycetaceae</taxon>
        <taxon>Saccharomyces</taxon>
    </lineage>
</organism>
<protein>
    <recommendedName>
        <fullName>Transcription factor CRF1</fullName>
    </recommendedName>
    <alternativeName>
        <fullName>Corepressor with FHL1 protein 1</fullName>
    </alternativeName>
</protein>